<protein>
    <recommendedName>
        <fullName>Homeobox protein pal-1</fullName>
    </recommendedName>
    <alternativeName>
        <fullName>Caudal homolog 1</fullName>
    </alternativeName>
    <alternativeName>
        <fullName>Homeobox protein ceh-3</fullName>
    </alternativeName>
    <alternativeName>
        <fullName>Posterior alae in males protein 1</fullName>
    </alternativeName>
</protein>
<sequence>MSVDVKSDFSENESSSTPSPTTVPADVTWPHYPMMPFMQPHPLREKMLQPTFDPQIYGRWSQMGDTGFYGHPDLYPFGLPQLAANGQIPAVEAVDVKPPLSNGSSSSDSGMYPSPSDMMTPFPSTSSGAASSSELSAAAAAAANYQMRAATCYQQSVWPFMDYQQFQGFSWKMPLGNNHGKDRRSSSDGKTLPTGPGTNNVRVRTADKYRMVYSDYQRLELEKEFHTSPFITSDRKSQLSTMLSLTERQIKIWFQNRRAKDRRDKQKIRL</sequence>
<comment type="function">
    <text evidence="3 4 8 9 10 12 13 14 15 16 17 18 19 20">Transcriptional activator. Interacts with promoter regions for tbx-8.9, tbx-9, elt-1, hnd-1, scrt-1, and vab-7 genes. Binds the sequence ATTTATGAC. Binds to the enhancer region of the hlh-1 gene promoter during embryonic body wall muscle development. Activates the gene for mab-5 in embryo development. Necessary for vab-7 expression in C blastomeres in the posterior of embryos. Required for posterior V6 neuroectoblast cell fate specification during postembryonic neurogenesis (patterning) which generates the characteristic ray lineage during male tail development. Binds to ced-3 promoter and activated expression which is crucial for tail-spike cell death. Has a role in E cell specification in endoderm development and body wall muscle development.</text>
</comment>
<comment type="subunit">
    <text evidence="7 11">Interacts with tir-1 and let-756.</text>
</comment>
<comment type="interaction">
    <interactant intactId="EBI-311911">
        <id>P34766</id>
    </interactant>
    <interactant intactId="EBI-311903">
        <id>P34441</id>
        <label>emb-30</label>
    </interactant>
    <organismsDiffer>false</organismsDiffer>
    <experiments>2</experiments>
</comment>
<comment type="subcellular location">
    <subcellularLocation>
        <location evidence="1 18">Nucleus</location>
    </subcellularLocation>
    <subcellularLocation>
        <location evidence="18">Chromosome</location>
        <location evidence="18">Centromere</location>
        <location evidence="18">Kinetochore</location>
    </subcellularLocation>
    <subcellularLocation>
        <location evidence="18">Chromosome</location>
    </subcellularLocation>
    <text>Localized to condensed chromosomes.</text>
</comment>
<comment type="alternative products">
    <event type="alternative splicing"/>
    <isoform>
        <id>P34766-1</id>
        <name>a</name>
        <sequence type="displayed"/>
    </isoform>
    <isoform>
        <id>P34766-2</id>
        <name>b</name>
        <sequence type="described" ref="VSP_039083"/>
    </isoform>
    <isoform>
        <id>P34766-3</id>
        <name>c</name>
        <sequence type="described" ref="VSP_039082 VSP_039083"/>
    </isoform>
</comment>
<comment type="tissue specificity">
    <text evidence="4 5 18 19 20">Blastomeres. Embryo. Oocytes.</text>
</comment>
<comment type="developmental stage">
    <text evidence="4 18">Expressed both maternally and zygotically. Expression observed at the 4 cell embryo in posterior blastomeres. Detected in all descendants of EMS and P2 blastomeres. During gastrulation and morphogenesis expression is seen sporadically in all major cell lineages except the germ line.</text>
</comment>
<comment type="induction">
    <text evidence="20">By heat shock.</text>
</comment>
<comment type="disruption phenotype">
    <text evidence="6 12 15 16">Embryos shows disorganization of cell types and lack specification. Loss of V6 rays development in male tail. C and D blastomere derived muscle.</text>
</comment>
<comment type="miscellaneous">
    <text>Fifth intron is thought to contain a regulatory element required for expression in postembryonic neuroblast V6 cells. 3'-UTR thought to inhibit self-translation in anterior blastomeres.</text>
</comment>
<comment type="similarity">
    <text evidence="21">Belongs to the Caudal homeobox family.</text>
</comment>
<comment type="sequence caution" evidence="21">
    <conflict type="erroneous initiation">
        <sequence resource="EMBL-CDS" id="CAA44619"/>
    </conflict>
    <text>Truncated N-terminus.</text>
</comment>
<evidence type="ECO:0000255" key="1">
    <source>
        <dbReference type="PROSITE-ProRule" id="PRU00108"/>
    </source>
</evidence>
<evidence type="ECO:0000256" key="2">
    <source>
        <dbReference type="SAM" id="MobiDB-lite"/>
    </source>
</evidence>
<evidence type="ECO:0000269" key="3">
    <source>
    </source>
</evidence>
<evidence type="ECO:0000269" key="4">
    <source>
    </source>
</evidence>
<evidence type="ECO:0000269" key="5">
    <source>
    </source>
</evidence>
<evidence type="ECO:0000269" key="6">
    <source>
    </source>
</evidence>
<evidence type="ECO:0000269" key="7">
    <source>
    </source>
</evidence>
<evidence type="ECO:0000269" key="8">
    <source>
    </source>
</evidence>
<evidence type="ECO:0000269" key="9">
    <source>
    </source>
</evidence>
<evidence type="ECO:0000269" key="10">
    <source>
    </source>
</evidence>
<evidence type="ECO:0000269" key="11">
    <source>
    </source>
</evidence>
<evidence type="ECO:0000269" key="12">
    <source>
    </source>
</evidence>
<evidence type="ECO:0000269" key="13">
    <source>
    </source>
</evidence>
<evidence type="ECO:0000269" key="14">
    <source>
    </source>
</evidence>
<evidence type="ECO:0000269" key="15">
    <source>
    </source>
</evidence>
<evidence type="ECO:0000269" key="16">
    <source>
    </source>
</evidence>
<evidence type="ECO:0000269" key="17">
    <source>
    </source>
</evidence>
<evidence type="ECO:0000269" key="18">
    <source>
    </source>
</evidence>
<evidence type="ECO:0000269" key="19">
    <source>
    </source>
</evidence>
<evidence type="ECO:0000269" key="20">
    <source>
    </source>
</evidence>
<evidence type="ECO:0000305" key="21"/>
<reference key="1">
    <citation type="journal article" date="1991" name="Nature">
        <title>Regulation of cellular responsiveness to inductive signals in the developing C. elegans nervous system.</title>
        <authorList>
            <person name="Waring D.A."/>
            <person name="Kenyon C."/>
        </authorList>
    </citation>
    <scope>NUCLEOTIDE SEQUENCE [MRNA] (ISOFORM A)</scope>
    <scope>FUNCTION</scope>
    <scope>DISRUPTION PHENOTYPE</scope>
    <source>
        <strain>Bristol N2</strain>
    </source>
</reference>
<reference key="2">
    <citation type="journal article" date="1998" name="Science">
        <title>Genome sequence of the nematode C. elegans: a platform for investigating biology.</title>
        <authorList>
            <consortium name="The C. elegans sequencing consortium"/>
        </authorList>
    </citation>
    <scope>NUCLEOTIDE SEQUENCE [LARGE SCALE GENOMIC DNA]</scope>
    <scope>ALTERNATIVE SPLICING</scope>
    <source>
        <strain>Bristol N2</strain>
    </source>
</reference>
<reference key="3">
    <citation type="journal article" date="1989" name="Nature">
        <title>Caenorhabditis elegans has scores of homoeobox-containing genes.</title>
        <authorList>
            <person name="Buerglin T.R."/>
            <person name="Finney M."/>
            <person name="Coulson A."/>
            <person name="Ruvkun G."/>
        </authorList>
    </citation>
    <scope>NUCLEOTIDE SEQUENCE [MRNA] OF 198-268 (ISOFORMS A/B/C)</scope>
    <source>
        <strain>Bristol N2</strain>
    </source>
</reference>
<reference key="4">
    <citation type="journal article" date="1990" name="Cell">
        <title>Selective silencing of cell communication influences anteroposterior pattern formation in C. elegans.</title>
        <authorList>
            <person name="Waring D.A."/>
            <person name="Kenyon C."/>
        </authorList>
    </citation>
    <scope>FUNCTION</scope>
    <scope>DISRUPTION PHENOTYPE</scope>
</reference>
<reference key="5">
    <citation type="journal article" date="1996" name="Cell">
        <title>Spatial and temporal controls target pal-1 blastomere-specification activity to a single blastomere lineage in C. elegans embryos.</title>
        <authorList>
            <person name="Hunter C.P."/>
            <person name="Kenyon C."/>
        </authorList>
    </citation>
    <scope>FUNCTION</scope>
    <scope>SUBCELLULAR LOCATION</scope>
    <scope>TISSUE SPECIFICITY</scope>
    <scope>DEVELOPMENTAL STAGE</scope>
</reference>
<reference key="6">
    <citation type="journal article" date="1996" name="Development">
        <title>A C. elegans Hox gene switches on, off, on and off again to regulate proliferation, differentiation and morphogenesis.</title>
        <authorList>
            <person name="Salser S.J."/>
            <person name="Kenyon C."/>
        </authorList>
    </citation>
    <scope>FUNCTION</scope>
</reference>
<reference key="7">
    <citation type="journal article" date="1997" name="Development">
        <title>The maternal par genes and the segregation of cell fate specification activities in early Caenorhabditis elegans embryos.</title>
        <authorList>
            <person name="Bowerman B."/>
            <person name="Ingram M.K."/>
            <person name="Hunter C.P."/>
        </authorList>
    </citation>
    <scope>FUNCTION</scope>
    <scope>TISSUE SPECIFICITY</scope>
</reference>
<reference key="8">
    <citation type="journal article" date="1997" name="Development">
        <title>Maternal control of a zygotic patterning gene in Caenorhabditis elegans.</title>
        <authorList>
            <person name="Ahringer J."/>
        </authorList>
    </citation>
    <scope>FUNCTION</scope>
    <scope>INDUCTION BY HEAT SHOCK</scope>
    <scope>TISSUE SPECIFICITY</scope>
</reference>
<reference key="9">
    <citation type="journal article" date="2000" name="Genes Dev.">
        <title>A C. elegans mediator protein confers regulatory selectivity on lineage-specific expression of a transcription factor gene.</title>
        <authorList>
            <person name="Zhang H."/>
            <person name="Emmons S.W."/>
        </authorList>
    </citation>
    <scope>FUNCTION</scope>
    <scope>MISCELLANEOUS</scope>
</reference>
<reference key="10">
    <citation type="journal article" date="2001" name="Dev. Biol.">
        <title>Zygotic expression of the caudal homolog pal-1 is required for posterior patterning in Caenorhabditis elegans embryogenesis.</title>
        <authorList>
            <person name="Edgar L.G."/>
            <person name="Carr S."/>
            <person name="Wang H."/>
            <person name="Wood W.B."/>
        </authorList>
    </citation>
    <scope>FUNCTION</scope>
    <scope>TISSUE SPECIFICITY</scope>
    <scope>DEVELOPMENTAL STAGE</scope>
</reference>
<reference key="11">
    <citation type="journal article" date="2002" name="Development">
        <title>MEX-3 interacting proteins link cell polarity to asymmetric gene expression in Caenorhabditis elegans.</title>
        <authorList>
            <person name="Huang N.N."/>
            <person name="Mootz D.E."/>
            <person name="Walhout A.J."/>
            <person name="Vidal M."/>
            <person name="Hunter C.P."/>
        </authorList>
    </citation>
    <scope>TISSUE SPECIFICITY</scope>
</reference>
<reference key="12">
    <citation type="journal article" date="2003" name="Dev. Cell">
        <title>Polycomb group regulation of Hox gene expression in C. elegans.</title>
        <authorList>
            <person name="Ross J.M."/>
            <person name="Zarkower D."/>
        </authorList>
    </citation>
    <scope>DISRUPTION PHENOTYPE</scope>
</reference>
<reference key="13">
    <citation type="journal article" date="2004" name="Nat. Immunol.">
        <title>TLR-independent control of innate immunity in Caenorhabditis elegans by the TIR domain adaptor protein TIR-1, an ortholog of human SARM.</title>
        <authorList>
            <person name="Couillault C."/>
            <person name="Pujol N."/>
            <person name="Reboul J."/>
            <person name="Sabatier L."/>
            <person name="Guichou J.-F."/>
            <person name="Kohara Y."/>
            <person name="Ewbank J.J."/>
        </authorList>
    </citation>
    <scope>INTERACTION WITH TIR-1</scope>
</reference>
<reference key="14">
    <citation type="journal article" date="2005" name="Dev. Biol.">
        <title>The Wnt effector POP-1 and the PAL-1/Caudal homeoprotein collaborate with SKN-1 to activate C. elegans endoderm development.</title>
        <authorList>
            <person name="Maduro M.F."/>
            <person name="Kasmir J.J."/>
            <person name="Zhu J."/>
            <person name="Rothman J.H."/>
        </authorList>
    </citation>
    <scope>FUNCTION</scope>
</reference>
<reference key="15">
    <citation type="journal article" date="2005" name="Development">
        <title>The myogenic potency of HLH-1 reveals wide-spread developmental plasticity in early C. elegans embryos.</title>
        <authorList>
            <person name="Fukushige T."/>
            <person name="Krause M."/>
        </authorList>
    </citation>
    <scope>FUNCTION</scope>
</reference>
<reference key="16">
    <citation type="journal article" date="2005" name="Development">
        <title>The homeodomain protein PAL-1 specifies a lineage-specific regulatory network in the C. elegans embryo.</title>
        <authorList>
            <person name="Baugh L.R."/>
            <person name="Hill A.A."/>
            <person name="Claggett J.M."/>
            <person name="Hill-Harfe K."/>
            <person name="Wen J.C."/>
            <person name="Slonim D.K."/>
            <person name="Brown E.L."/>
            <person name="Hunter C.P."/>
        </authorList>
    </citation>
    <scope>FUNCTION</scope>
</reference>
<reference key="17">
    <citation type="journal article" date="2006" name="BMC Genomics">
        <title>Direct and heterologous approaches to identify the LET-756/FGF interactome.</title>
        <authorList>
            <person name="Popovici C."/>
            <person name="Berda Y."/>
            <person name="Conchonaud F."/>
            <person name="Harbis A."/>
            <person name="Birnbaum D."/>
            <person name="Roubin R."/>
        </authorList>
    </citation>
    <scope>INTERACTION WITH LET-756</scope>
</reference>
<reference key="18">
    <citation type="journal article" date="2006" name="Development">
        <title>Specification of the C. elegans MS blastomere by the T-box factor TBX-35.</title>
        <authorList>
            <person name="Broitman-Maduro G."/>
            <person name="Lin K.T."/>
            <person name="Hung W.W."/>
            <person name="Maduro M.F."/>
        </authorList>
    </citation>
    <scope>FUNCTION</scope>
    <scope>DISRUPTION PHENOTYPE</scope>
</reference>
<reference key="19">
    <citation type="journal article" date="2007" name="Development">
        <title>Timing of the onset of a developmental cell death is controlled by transcriptional induction of the C. elegans ced-3 caspase-encoding gene.</title>
        <authorList>
            <person name="Maurer C.W."/>
            <person name="Chiorazzi M."/>
            <person name="Shaham S."/>
        </authorList>
    </citation>
    <scope>FUNCTION</scope>
</reference>
<reference key="20">
    <citation type="journal article" date="2008" name="Mol. Syst. Biol.">
        <title>Pairing of competitive and topologically distinct regulatory modules enhances patterned gene expression.</title>
        <authorList>
            <person name="Yanai I."/>
            <person name="Baugh L.R."/>
            <person name="Smith J.J."/>
            <person name="Roehrig C."/>
            <person name="Shen-Orr S.S."/>
            <person name="Claggett J.M."/>
            <person name="Hill A.A."/>
            <person name="Slonim D.K."/>
            <person name="Hunter C.P."/>
        </authorList>
    </citation>
    <scope>FUNCTION</scope>
</reference>
<feature type="chain" id="PRO_0000049234" description="Homeobox protein pal-1">
    <location>
        <begin position="1"/>
        <end position="270"/>
    </location>
</feature>
<feature type="DNA-binding region" description="Homeobox" evidence="1">
    <location>
        <begin position="206"/>
        <end position="265"/>
    </location>
</feature>
<feature type="region of interest" description="Disordered" evidence="2">
    <location>
        <begin position="1"/>
        <end position="24"/>
    </location>
</feature>
<feature type="region of interest" description="Disordered" evidence="2">
    <location>
        <begin position="96"/>
        <end position="130"/>
    </location>
</feature>
<feature type="region of interest" description="Disordered" evidence="2">
    <location>
        <begin position="175"/>
        <end position="201"/>
    </location>
</feature>
<feature type="compositionally biased region" description="Low complexity" evidence="2">
    <location>
        <begin position="14"/>
        <end position="24"/>
    </location>
</feature>
<feature type="compositionally biased region" description="Low complexity" evidence="2">
    <location>
        <begin position="101"/>
        <end position="130"/>
    </location>
</feature>
<feature type="splice variant" id="VSP_039082" description="In isoform c." evidence="21">
    <location>
        <begin position="1"/>
        <end position="46"/>
    </location>
</feature>
<feature type="splice variant" id="VSP_039083" description="In isoform b and isoform c." evidence="21">
    <location>
        <begin position="166"/>
        <end position="167"/>
    </location>
</feature>
<name>PAL1_CAEEL</name>
<proteinExistence type="evidence at protein level"/>
<gene>
    <name type="primary">pal-1</name>
    <name type="synonym">ceh-3</name>
    <name type="ORF">C38D4.6</name>
</gene>
<organism>
    <name type="scientific">Caenorhabditis elegans</name>
    <dbReference type="NCBI Taxonomy" id="6239"/>
    <lineage>
        <taxon>Eukaryota</taxon>
        <taxon>Metazoa</taxon>
        <taxon>Ecdysozoa</taxon>
        <taxon>Nematoda</taxon>
        <taxon>Chromadorea</taxon>
        <taxon>Rhabditida</taxon>
        <taxon>Rhabditina</taxon>
        <taxon>Rhabditomorpha</taxon>
        <taxon>Rhabditoidea</taxon>
        <taxon>Rhabditidae</taxon>
        <taxon>Peloderinae</taxon>
        <taxon>Caenorhabditis</taxon>
    </lineage>
</organism>
<accession>P34766</accession>
<accession>C9IY23</accession>
<accession>Q18513</accession>
<accession>Q65ZB9</accession>
<dbReference type="EMBL" id="X62782">
    <property type="protein sequence ID" value="CAA44619.1"/>
    <property type="status" value="ALT_INIT"/>
    <property type="molecule type" value="mRNA"/>
</dbReference>
<dbReference type="EMBL" id="Z46241">
    <property type="protein sequence ID" value="CAA86322.2"/>
    <property type="molecule type" value="Genomic_DNA"/>
</dbReference>
<dbReference type="EMBL" id="Z46241">
    <property type="protein sequence ID" value="CAH19082.1"/>
    <property type="molecule type" value="Genomic_DNA"/>
</dbReference>
<dbReference type="EMBL" id="Z46241">
    <property type="protein sequence ID" value="CBG22736.1"/>
    <property type="molecule type" value="Genomic_DNA"/>
</dbReference>
<dbReference type="EMBL" id="X57140">
    <property type="protein sequence ID" value="CAA40419.1"/>
    <property type="molecule type" value="mRNA"/>
</dbReference>
<dbReference type="PIR" id="S15091">
    <property type="entry name" value="S15091"/>
</dbReference>
<dbReference type="PIR" id="T19829">
    <property type="entry name" value="T19829"/>
</dbReference>
<dbReference type="RefSeq" id="NP_001021209.1">
    <molecule id="P34766-1"/>
    <property type="nucleotide sequence ID" value="NM_001026038.7"/>
</dbReference>
<dbReference type="RefSeq" id="NP_001021210.1">
    <property type="nucleotide sequence ID" value="NM_001026039.3"/>
</dbReference>
<dbReference type="RefSeq" id="NP_001254921.1">
    <molecule id="P34766-3"/>
    <property type="nucleotide sequence ID" value="NM_001267992.4"/>
</dbReference>
<dbReference type="RefSeq" id="NP_001379426.1">
    <molecule id="P34766-2"/>
    <property type="nucleotide sequence ID" value="NM_001393326.1"/>
</dbReference>
<dbReference type="SMR" id="P34766"/>
<dbReference type="BioGRID" id="40872">
    <property type="interactions" value="73"/>
</dbReference>
<dbReference type="FunCoup" id="P34766">
    <property type="interactions" value="67"/>
</dbReference>
<dbReference type="IntAct" id="P34766">
    <property type="interactions" value="51"/>
</dbReference>
<dbReference type="STRING" id="6239.C38D4.6a.1"/>
<dbReference type="PaxDb" id="6239-C38D4.6a"/>
<dbReference type="EnsemblMetazoa" id="C38D4.6a.1">
    <molecule id="P34766-1"/>
    <property type="protein sequence ID" value="C38D4.6a.1"/>
    <property type="gene ID" value="WBGene00003912"/>
</dbReference>
<dbReference type="EnsemblMetazoa" id="C38D4.6a.2">
    <molecule id="P34766-1"/>
    <property type="protein sequence ID" value="C38D4.6a.2"/>
    <property type="gene ID" value="WBGene00003912"/>
</dbReference>
<dbReference type="EnsemblMetazoa" id="C38D4.6b.1">
    <molecule id="P34766-2"/>
    <property type="protein sequence ID" value="C38D4.6b.1"/>
    <property type="gene ID" value="WBGene00003912"/>
</dbReference>
<dbReference type="EnsemblMetazoa" id="C38D4.6b.2">
    <molecule id="P34766-2"/>
    <property type="protein sequence ID" value="C38D4.6b.2"/>
    <property type="gene ID" value="WBGene00003912"/>
</dbReference>
<dbReference type="EnsemblMetazoa" id="C38D4.6c.1">
    <molecule id="P34766-3"/>
    <property type="protein sequence ID" value="C38D4.6c.1"/>
    <property type="gene ID" value="WBGene00003912"/>
</dbReference>
<dbReference type="GeneID" id="175638"/>
<dbReference type="KEGG" id="cel:CELE_C38D4.6"/>
<dbReference type="UCSC" id="C38D4.6a.2">
    <molecule id="P34766-1"/>
    <property type="organism name" value="c. elegans"/>
</dbReference>
<dbReference type="AGR" id="WB:WBGene00003912"/>
<dbReference type="CTD" id="175638"/>
<dbReference type="WormBase" id="C38D4.6a">
    <molecule id="P34766-1"/>
    <property type="protein sequence ID" value="CE27837"/>
    <property type="gene ID" value="WBGene00003912"/>
    <property type="gene designation" value="pal-1"/>
</dbReference>
<dbReference type="WormBase" id="C38D4.6b">
    <molecule id="P34766-2"/>
    <property type="protein sequence ID" value="CE05383"/>
    <property type="gene ID" value="WBGene00003912"/>
    <property type="gene designation" value="pal-1"/>
</dbReference>
<dbReference type="WormBase" id="C38D4.6c">
    <molecule id="P34766-3"/>
    <property type="protein sequence ID" value="CE44166"/>
    <property type="gene ID" value="WBGene00003912"/>
    <property type="gene designation" value="pal-1"/>
</dbReference>
<dbReference type="eggNOG" id="KOG0848">
    <property type="taxonomic scope" value="Eukaryota"/>
</dbReference>
<dbReference type="InParanoid" id="P34766"/>
<dbReference type="OMA" id="VWPFMDY"/>
<dbReference type="OrthoDB" id="6159439at2759"/>
<dbReference type="SignaLink" id="P34766"/>
<dbReference type="PRO" id="PR:P34766"/>
<dbReference type="Proteomes" id="UP000001940">
    <property type="component" value="Chromosome III"/>
</dbReference>
<dbReference type="Bgee" id="WBGene00003912">
    <property type="expression patterns" value="Expressed in germ line (C elegans) and 13 other cell types or tissues"/>
</dbReference>
<dbReference type="GO" id="GO:0000794">
    <property type="term" value="C:condensed nuclear chromosome"/>
    <property type="evidence" value="ECO:0000314"/>
    <property type="project" value="WormBase"/>
</dbReference>
<dbReference type="GO" id="GO:0000776">
    <property type="term" value="C:kinetochore"/>
    <property type="evidence" value="ECO:0007669"/>
    <property type="project" value="UniProtKB-KW"/>
</dbReference>
<dbReference type="GO" id="GO:0005634">
    <property type="term" value="C:nucleus"/>
    <property type="evidence" value="ECO:0000314"/>
    <property type="project" value="WormBase"/>
</dbReference>
<dbReference type="GO" id="GO:0000981">
    <property type="term" value="F:DNA-binding transcription factor activity, RNA polymerase II-specific"/>
    <property type="evidence" value="ECO:0000314"/>
    <property type="project" value="WormBase"/>
</dbReference>
<dbReference type="GO" id="GO:0000977">
    <property type="term" value="F:RNA polymerase II transcription regulatory region sequence-specific DNA binding"/>
    <property type="evidence" value="ECO:0000314"/>
    <property type="project" value="WormBase"/>
</dbReference>
<dbReference type="GO" id="GO:0001712">
    <property type="term" value="P:ectodermal cell fate commitment"/>
    <property type="evidence" value="ECO:0000315"/>
    <property type="project" value="WormBase"/>
</dbReference>
<dbReference type="GO" id="GO:0009792">
    <property type="term" value="P:embryo development ending in birth or egg hatching"/>
    <property type="evidence" value="ECO:0000315"/>
    <property type="project" value="WormBase"/>
</dbReference>
<dbReference type="GO" id="GO:0009880">
    <property type="term" value="P:embryonic pattern specification"/>
    <property type="evidence" value="ECO:0000315"/>
    <property type="project" value="WormBase"/>
</dbReference>
<dbReference type="GO" id="GO:0042693">
    <property type="term" value="P:muscle cell fate commitment"/>
    <property type="evidence" value="ECO:0000315"/>
    <property type="project" value="WormBase"/>
</dbReference>
<dbReference type="GO" id="GO:0043065">
    <property type="term" value="P:positive regulation of apoptotic process"/>
    <property type="evidence" value="ECO:0000315"/>
    <property type="project" value="WormBase"/>
</dbReference>
<dbReference type="GO" id="GO:1902895">
    <property type="term" value="P:positive regulation of miRNA transcription"/>
    <property type="evidence" value="ECO:0000315"/>
    <property type="project" value="UniProtKB"/>
</dbReference>
<dbReference type="GO" id="GO:0045944">
    <property type="term" value="P:positive regulation of transcription by RNA polymerase II"/>
    <property type="evidence" value="ECO:0000314"/>
    <property type="project" value="WormBase"/>
</dbReference>
<dbReference type="CDD" id="cd00086">
    <property type="entry name" value="homeodomain"/>
    <property type="match status" value="1"/>
</dbReference>
<dbReference type="FunFam" id="1.10.10.60:FF:000722">
    <property type="entry name" value="Homeobox protein pal-1"/>
    <property type="match status" value="1"/>
</dbReference>
<dbReference type="Gene3D" id="1.10.10.60">
    <property type="entry name" value="Homeodomain-like"/>
    <property type="match status" value="1"/>
</dbReference>
<dbReference type="InterPro" id="IPR047152">
    <property type="entry name" value="Caudal_homeobox"/>
</dbReference>
<dbReference type="InterPro" id="IPR001356">
    <property type="entry name" value="HD"/>
</dbReference>
<dbReference type="InterPro" id="IPR017970">
    <property type="entry name" value="Homeobox_CS"/>
</dbReference>
<dbReference type="InterPro" id="IPR009057">
    <property type="entry name" value="Homeodomain-like_sf"/>
</dbReference>
<dbReference type="PANTHER" id="PTHR24332">
    <property type="entry name" value="HOMEOBOX PROTEIN CDX"/>
    <property type="match status" value="1"/>
</dbReference>
<dbReference type="PANTHER" id="PTHR24332:SF9">
    <property type="entry name" value="HOMEOTIC PROTEIN CAUDAL"/>
    <property type="match status" value="1"/>
</dbReference>
<dbReference type="Pfam" id="PF00046">
    <property type="entry name" value="Homeodomain"/>
    <property type="match status" value="1"/>
</dbReference>
<dbReference type="SMART" id="SM00389">
    <property type="entry name" value="HOX"/>
    <property type="match status" value="1"/>
</dbReference>
<dbReference type="SUPFAM" id="SSF46689">
    <property type="entry name" value="Homeodomain-like"/>
    <property type="match status" value="1"/>
</dbReference>
<dbReference type="PROSITE" id="PS00027">
    <property type="entry name" value="HOMEOBOX_1"/>
    <property type="match status" value="1"/>
</dbReference>
<dbReference type="PROSITE" id="PS50071">
    <property type="entry name" value="HOMEOBOX_2"/>
    <property type="match status" value="1"/>
</dbReference>
<keyword id="KW-0010">Activator</keyword>
<keyword id="KW-0025">Alternative splicing</keyword>
<keyword id="KW-0137">Centromere</keyword>
<keyword id="KW-0158">Chromosome</keyword>
<keyword id="KW-0217">Developmental protein</keyword>
<keyword id="KW-0238">DNA-binding</keyword>
<keyword id="KW-0371">Homeobox</keyword>
<keyword id="KW-0995">Kinetochore</keyword>
<keyword id="KW-0539">Nucleus</keyword>
<keyword id="KW-1185">Reference proteome</keyword>
<keyword id="KW-0804">Transcription</keyword>
<keyword id="KW-0805">Transcription regulation</keyword>